<protein>
    <recommendedName>
        <fullName evidence="1">Anhydro-N-acetylmuramic acid kinase</fullName>
        <ecNumber evidence="1">2.7.1.170</ecNumber>
    </recommendedName>
    <alternativeName>
        <fullName evidence="1">AnhMurNAc kinase</fullName>
    </alternativeName>
</protein>
<reference key="1">
    <citation type="journal article" date="2001" name="Proc. Natl. Acad. Sci. U.S.A.">
        <title>Genome sequence of an industrial microorganism Streptomyces avermitilis: deducing the ability of producing secondary metabolites.</title>
        <authorList>
            <person name="Omura S."/>
            <person name="Ikeda H."/>
            <person name="Ishikawa J."/>
            <person name="Hanamoto A."/>
            <person name="Takahashi C."/>
            <person name="Shinose M."/>
            <person name="Takahashi Y."/>
            <person name="Horikawa H."/>
            <person name="Nakazawa H."/>
            <person name="Osonoe T."/>
            <person name="Kikuchi H."/>
            <person name="Shiba T."/>
            <person name="Sakaki Y."/>
            <person name="Hattori M."/>
        </authorList>
    </citation>
    <scope>NUCLEOTIDE SEQUENCE [LARGE SCALE GENOMIC DNA]</scope>
    <source>
        <strain>ATCC 31267 / DSM 46492 / JCM 5070 / NBRC 14893 / NCIMB 12804 / NRRL 8165 / MA-4680</strain>
    </source>
</reference>
<reference key="2">
    <citation type="journal article" date="2003" name="Nat. Biotechnol.">
        <title>Complete genome sequence and comparative analysis of the industrial microorganism Streptomyces avermitilis.</title>
        <authorList>
            <person name="Ikeda H."/>
            <person name="Ishikawa J."/>
            <person name="Hanamoto A."/>
            <person name="Shinose M."/>
            <person name="Kikuchi H."/>
            <person name="Shiba T."/>
            <person name="Sakaki Y."/>
            <person name="Hattori M."/>
            <person name="Omura S."/>
        </authorList>
    </citation>
    <scope>NUCLEOTIDE SEQUENCE [LARGE SCALE GENOMIC DNA]</scope>
    <source>
        <strain>ATCC 31267 / DSM 46492 / JCM 5070 / NBRC 14893 / NCIMB 12804 / NRRL 8165 / MA-4680</strain>
    </source>
</reference>
<keyword id="KW-0067">ATP-binding</keyword>
<keyword id="KW-0119">Carbohydrate metabolism</keyword>
<keyword id="KW-0418">Kinase</keyword>
<keyword id="KW-0547">Nucleotide-binding</keyword>
<keyword id="KW-1185">Reference proteome</keyword>
<keyword id="KW-0808">Transferase</keyword>
<gene>
    <name evidence="1" type="primary">anmK</name>
    <name type="ordered locus">SAV_1709</name>
</gene>
<comment type="function">
    <text evidence="1">Catalyzes the specific phosphorylation of 1,6-anhydro-N-acetylmuramic acid (anhMurNAc) with the simultaneous cleavage of the 1,6-anhydro ring, generating MurNAc-6-P. Is required for the utilization of anhMurNAc either imported from the medium or derived from its own cell wall murein, and thus plays a role in cell wall recycling.</text>
</comment>
<comment type="catalytic activity">
    <reaction evidence="1">
        <text>1,6-anhydro-N-acetyl-beta-muramate + ATP + H2O = N-acetyl-D-muramate 6-phosphate + ADP + H(+)</text>
        <dbReference type="Rhea" id="RHEA:24952"/>
        <dbReference type="ChEBI" id="CHEBI:15377"/>
        <dbReference type="ChEBI" id="CHEBI:15378"/>
        <dbReference type="ChEBI" id="CHEBI:30616"/>
        <dbReference type="ChEBI" id="CHEBI:58690"/>
        <dbReference type="ChEBI" id="CHEBI:58722"/>
        <dbReference type="ChEBI" id="CHEBI:456216"/>
        <dbReference type="EC" id="2.7.1.170"/>
    </reaction>
</comment>
<comment type="pathway">
    <text evidence="1">Amino-sugar metabolism; 1,6-anhydro-N-acetylmuramate degradation.</text>
</comment>
<comment type="pathway">
    <text evidence="1">Cell wall biogenesis; peptidoglycan recycling.</text>
</comment>
<comment type="similarity">
    <text evidence="1">Belongs to the anhydro-N-acetylmuramic acid kinase family.</text>
</comment>
<accession>Q82MF1</accession>
<evidence type="ECO:0000255" key="1">
    <source>
        <dbReference type="HAMAP-Rule" id="MF_01270"/>
    </source>
</evidence>
<proteinExistence type="inferred from homology"/>
<sequence>MRVIGLMSGTSYDAIDAAAADLGLAGDRLVLKPLGLMSEAYDSGLREELAAALPPAATSLAGVCRLDTRIGQAFAAAAVRADRELCGGRAELVASHGQTVYHWAEAGRVYGTLQLGQPAWIAEATGLPVVADFRPRDIAAGGQGAPLVSLVDLLWLRGRAGTSVALNLGGIANLTAPDGTAFDTGPACALIDAAAHGLSGGRLDHDVDGALAARGTVHEPMLRRLLAEPYYALPAPKTTGKELFHLGYLRDALAGFGTLTAEDVIATLTRLTALTVADAVRAVRATEVVASGGGTRNPVLMEMLARELGAVALRTSDELGLPSAAKEAYAFAVLGFLTVHGLAGTDPVSTGARHPSVLGSVTPGRDGLRLPPRADWSPVRLVLE</sequence>
<dbReference type="EC" id="2.7.1.170" evidence="1"/>
<dbReference type="EMBL" id="BA000030">
    <property type="protein sequence ID" value="BAC69420.1"/>
    <property type="molecule type" value="Genomic_DNA"/>
</dbReference>
<dbReference type="RefSeq" id="WP_010983148.1">
    <property type="nucleotide sequence ID" value="NZ_JZJK01000086.1"/>
</dbReference>
<dbReference type="SMR" id="Q82MF1"/>
<dbReference type="GeneID" id="41538809"/>
<dbReference type="KEGG" id="sma:SAVERM_1709"/>
<dbReference type="eggNOG" id="COG2377">
    <property type="taxonomic scope" value="Bacteria"/>
</dbReference>
<dbReference type="HOGENOM" id="CLU_038782_1_0_11"/>
<dbReference type="OrthoDB" id="9763949at2"/>
<dbReference type="UniPathway" id="UPA00343"/>
<dbReference type="UniPathway" id="UPA00544"/>
<dbReference type="Proteomes" id="UP000000428">
    <property type="component" value="Chromosome"/>
</dbReference>
<dbReference type="GO" id="GO:0005524">
    <property type="term" value="F:ATP binding"/>
    <property type="evidence" value="ECO:0007669"/>
    <property type="project" value="UniProtKB-UniRule"/>
</dbReference>
<dbReference type="GO" id="GO:0016301">
    <property type="term" value="F:kinase activity"/>
    <property type="evidence" value="ECO:0007669"/>
    <property type="project" value="UniProtKB-KW"/>
</dbReference>
<dbReference type="GO" id="GO:0016773">
    <property type="term" value="F:phosphotransferase activity, alcohol group as acceptor"/>
    <property type="evidence" value="ECO:0007669"/>
    <property type="project" value="UniProtKB-UniRule"/>
</dbReference>
<dbReference type="GO" id="GO:0097175">
    <property type="term" value="P:1,6-anhydro-N-acetyl-beta-muramic acid catabolic process"/>
    <property type="evidence" value="ECO:0007669"/>
    <property type="project" value="UniProtKB-UniRule"/>
</dbReference>
<dbReference type="GO" id="GO:0006040">
    <property type="term" value="P:amino sugar metabolic process"/>
    <property type="evidence" value="ECO:0007669"/>
    <property type="project" value="InterPro"/>
</dbReference>
<dbReference type="GO" id="GO:0009254">
    <property type="term" value="P:peptidoglycan turnover"/>
    <property type="evidence" value="ECO:0007669"/>
    <property type="project" value="UniProtKB-UniRule"/>
</dbReference>
<dbReference type="Gene3D" id="3.30.420.40">
    <property type="match status" value="2"/>
</dbReference>
<dbReference type="HAMAP" id="MF_01270">
    <property type="entry name" value="AnhMurNAc_kinase"/>
    <property type="match status" value="1"/>
</dbReference>
<dbReference type="InterPro" id="IPR005338">
    <property type="entry name" value="Anhydro_N_Ac-Mur_kinase"/>
</dbReference>
<dbReference type="InterPro" id="IPR043129">
    <property type="entry name" value="ATPase_NBD"/>
</dbReference>
<dbReference type="NCBIfam" id="NF007146">
    <property type="entry name" value="PRK09585.2-6"/>
    <property type="match status" value="1"/>
</dbReference>
<dbReference type="PANTHER" id="PTHR30605">
    <property type="entry name" value="ANHYDRO-N-ACETYLMURAMIC ACID KINASE"/>
    <property type="match status" value="1"/>
</dbReference>
<dbReference type="PANTHER" id="PTHR30605:SF0">
    <property type="entry name" value="ANHYDRO-N-ACETYLMURAMIC ACID KINASE"/>
    <property type="match status" value="1"/>
</dbReference>
<dbReference type="Pfam" id="PF03702">
    <property type="entry name" value="AnmK"/>
    <property type="match status" value="1"/>
</dbReference>
<dbReference type="SUPFAM" id="SSF53067">
    <property type="entry name" value="Actin-like ATPase domain"/>
    <property type="match status" value="1"/>
</dbReference>
<organism>
    <name type="scientific">Streptomyces avermitilis (strain ATCC 31267 / DSM 46492 / JCM 5070 / NBRC 14893 / NCIMB 12804 / NRRL 8165 / MA-4680)</name>
    <dbReference type="NCBI Taxonomy" id="227882"/>
    <lineage>
        <taxon>Bacteria</taxon>
        <taxon>Bacillati</taxon>
        <taxon>Actinomycetota</taxon>
        <taxon>Actinomycetes</taxon>
        <taxon>Kitasatosporales</taxon>
        <taxon>Streptomycetaceae</taxon>
        <taxon>Streptomyces</taxon>
    </lineage>
</organism>
<name>ANMK_STRAW</name>
<feature type="chain" id="PRO_0000250065" description="Anhydro-N-acetylmuramic acid kinase">
    <location>
        <begin position="1"/>
        <end position="384"/>
    </location>
</feature>
<feature type="binding site" evidence="1">
    <location>
        <begin position="9"/>
        <end position="16"/>
    </location>
    <ligand>
        <name>ATP</name>
        <dbReference type="ChEBI" id="CHEBI:30616"/>
    </ligand>
</feature>